<evidence type="ECO:0000305" key="1"/>
<accession>Q81AD9</accession>
<proteinExistence type="inferred from homology"/>
<dbReference type="EMBL" id="AE016877">
    <property type="protein sequence ID" value="AAP10565.1"/>
    <property type="molecule type" value="Genomic_DNA"/>
</dbReference>
<dbReference type="RefSeq" id="NP_833364.1">
    <property type="nucleotide sequence ID" value="NC_004722.1"/>
</dbReference>
<dbReference type="RefSeq" id="WP_000160421.1">
    <property type="nucleotide sequence ID" value="NZ_CP138336.1"/>
</dbReference>
<dbReference type="SMR" id="Q81AD9"/>
<dbReference type="STRING" id="226900.BC_3635"/>
<dbReference type="KEGG" id="bce:BC3635"/>
<dbReference type="PATRIC" id="fig|226900.8.peg.3735"/>
<dbReference type="HOGENOM" id="CLU_135567_3_0_9"/>
<dbReference type="Proteomes" id="UP000001417">
    <property type="component" value="Chromosome"/>
</dbReference>
<dbReference type="Gene3D" id="1.10.1470.10">
    <property type="entry name" value="YjbJ"/>
    <property type="match status" value="1"/>
</dbReference>
<dbReference type="InterPro" id="IPR008462">
    <property type="entry name" value="CsbD"/>
</dbReference>
<dbReference type="InterPro" id="IPR050423">
    <property type="entry name" value="UPF0337_stress_rsp"/>
</dbReference>
<dbReference type="InterPro" id="IPR036629">
    <property type="entry name" value="YjbJ_sf"/>
</dbReference>
<dbReference type="PANTHER" id="PTHR34977">
    <property type="entry name" value="UPF0337 PROTEIN YJBJ"/>
    <property type="match status" value="1"/>
</dbReference>
<dbReference type="PANTHER" id="PTHR34977:SF1">
    <property type="entry name" value="UPF0337 PROTEIN YJBJ"/>
    <property type="match status" value="1"/>
</dbReference>
<dbReference type="Pfam" id="PF05532">
    <property type="entry name" value="CsbD"/>
    <property type="match status" value="1"/>
</dbReference>
<dbReference type="SUPFAM" id="SSF69047">
    <property type="entry name" value="Hypothetical protein YjbJ"/>
    <property type="match status" value="1"/>
</dbReference>
<comment type="similarity">
    <text evidence="1">Belongs to the UPF0337 (CsbD) family.</text>
</comment>
<organism>
    <name type="scientific">Bacillus cereus (strain ATCC 14579 / DSM 31 / CCUG 7414 / JCM 2152 / NBRC 15305 / NCIMB 9373 / NCTC 2599 / NRRL B-3711)</name>
    <dbReference type="NCBI Taxonomy" id="226900"/>
    <lineage>
        <taxon>Bacteria</taxon>
        <taxon>Bacillati</taxon>
        <taxon>Bacillota</taxon>
        <taxon>Bacilli</taxon>
        <taxon>Bacillales</taxon>
        <taxon>Bacillaceae</taxon>
        <taxon>Bacillus</taxon>
        <taxon>Bacillus cereus group</taxon>
    </lineage>
</organism>
<gene>
    <name type="ordered locus">BC_3635</name>
</gene>
<sequence length="70" mass="7954">MTKHDHGLKEKVEGTIDKVKGEVKEVVGKVTDNKKLQAEGKWDKVKGTAKDTVGNVKEKVHEYKEHKKEK</sequence>
<keyword id="KW-1185">Reference proteome</keyword>
<reference key="1">
    <citation type="journal article" date="2003" name="Nature">
        <title>Genome sequence of Bacillus cereus and comparative analysis with Bacillus anthracis.</title>
        <authorList>
            <person name="Ivanova N."/>
            <person name="Sorokin A."/>
            <person name="Anderson I."/>
            <person name="Galleron N."/>
            <person name="Candelon B."/>
            <person name="Kapatral V."/>
            <person name="Bhattacharyya A."/>
            <person name="Reznik G."/>
            <person name="Mikhailova N."/>
            <person name="Lapidus A."/>
            <person name="Chu L."/>
            <person name="Mazur M."/>
            <person name="Goltsman E."/>
            <person name="Larsen N."/>
            <person name="D'Souza M."/>
            <person name="Walunas T."/>
            <person name="Grechkin Y."/>
            <person name="Pusch G."/>
            <person name="Haselkorn R."/>
            <person name="Fonstein M."/>
            <person name="Ehrlich S.D."/>
            <person name="Overbeek R."/>
            <person name="Kyrpides N.C."/>
        </authorList>
    </citation>
    <scope>NUCLEOTIDE SEQUENCE [LARGE SCALE GENOMIC DNA]</scope>
    <source>
        <strain>ATCC 14579 / DSM 31 / CCUG 7414 / JCM 2152 / NBRC 15305 / NCIMB 9373 / NCTC 2599 / NRRL B-3711</strain>
    </source>
</reference>
<name>Y3635_BACCR</name>
<feature type="chain" id="PRO_0000209984" description="UPF0337 protein BC_3635">
    <location>
        <begin position="1"/>
        <end position="70"/>
    </location>
</feature>
<protein>
    <recommendedName>
        <fullName>UPF0337 protein BC_3635</fullName>
    </recommendedName>
</protein>